<dbReference type="EC" id="2.7.2.1" evidence="1"/>
<dbReference type="EMBL" id="BA000035">
    <property type="protein sequence ID" value="BAC19400.1"/>
    <property type="molecule type" value="Genomic_DNA"/>
</dbReference>
<dbReference type="RefSeq" id="WP_006769048.1">
    <property type="nucleotide sequence ID" value="NC_004369.1"/>
</dbReference>
<dbReference type="SMR" id="Q8FMB7"/>
<dbReference type="STRING" id="196164.gene:10743037"/>
<dbReference type="KEGG" id="cef:CE2590"/>
<dbReference type="eggNOG" id="COG0282">
    <property type="taxonomic scope" value="Bacteria"/>
</dbReference>
<dbReference type="HOGENOM" id="CLU_020352_0_1_11"/>
<dbReference type="OrthoDB" id="9802453at2"/>
<dbReference type="UniPathway" id="UPA00340">
    <property type="reaction ID" value="UER00458"/>
</dbReference>
<dbReference type="Proteomes" id="UP000001409">
    <property type="component" value="Chromosome"/>
</dbReference>
<dbReference type="GO" id="GO:0005737">
    <property type="term" value="C:cytoplasm"/>
    <property type="evidence" value="ECO:0007669"/>
    <property type="project" value="UniProtKB-SubCell"/>
</dbReference>
<dbReference type="GO" id="GO:0008776">
    <property type="term" value="F:acetate kinase activity"/>
    <property type="evidence" value="ECO:0007669"/>
    <property type="project" value="UniProtKB-UniRule"/>
</dbReference>
<dbReference type="GO" id="GO:0005524">
    <property type="term" value="F:ATP binding"/>
    <property type="evidence" value="ECO:0007669"/>
    <property type="project" value="UniProtKB-KW"/>
</dbReference>
<dbReference type="GO" id="GO:0000287">
    <property type="term" value="F:magnesium ion binding"/>
    <property type="evidence" value="ECO:0007669"/>
    <property type="project" value="UniProtKB-UniRule"/>
</dbReference>
<dbReference type="GO" id="GO:0006083">
    <property type="term" value="P:acetate metabolic process"/>
    <property type="evidence" value="ECO:0007669"/>
    <property type="project" value="TreeGrafter"/>
</dbReference>
<dbReference type="GO" id="GO:0006085">
    <property type="term" value="P:acetyl-CoA biosynthetic process"/>
    <property type="evidence" value="ECO:0007669"/>
    <property type="project" value="UniProtKB-UniRule"/>
</dbReference>
<dbReference type="CDD" id="cd24010">
    <property type="entry name" value="ASKHA_NBD_AcK_PK"/>
    <property type="match status" value="1"/>
</dbReference>
<dbReference type="Gene3D" id="3.30.420.40">
    <property type="match status" value="2"/>
</dbReference>
<dbReference type="HAMAP" id="MF_00020">
    <property type="entry name" value="Acetate_kinase"/>
    <property type="match status" value="1"/>
</dbReference>
<dbReference type="InterPro" id="IPR004372">
    <property type="entry name" value="Ac/propionate_kinase"/>
</dbReference>
<dbReference type="InterPro" id="IPR000890">
    <property type="entry name" value="Aliphatic_acid_kin_short-chain"/>
</dbReference>
<dbReference type="InterPro" id="IPR023865">
    <property type="entry name" value="Aliphatic_acid_kinase_CS"/>
</dbReference>
<dbReference type="InterPro" id="IPR043129">
    <property type="entry name" value="ATPase_NBD"/>
</dbReference>
<dbReference type="NCBIfam" id="TIGR00016">
    <property type="entry name" value="ackA"/>
    <property type="match status" value="1"/>
</dbReference>
<dbReference type="PANTHER" id="PTHR21060">
    <property type="entry name" value="ACETATE KINASE"/>
    <property type="match status" value="1"/>
</dbReference>
<dbReference type="PANTHER" id="PTHR21060:SF15">
    <property type="entry name" value="ACETATE KINASE-RELATED"/>
    <property type="match status" value="1"/>
</dbReference>
<dbReference type="Pfam" id="PF00871">
    <property type="entry name" value="Acetate_kinase"/>
    <property type="match status" value="1"/>
</dbReference>
<dbReference type="PIRSF" id="PIRSF000722">
    <property type="entry name" value="Acetate_prop_kin"/>
    <property type="match status" value="1"/>
</dbReference>
<dbReference type="PRINTS" id="PR00471">
    <property type="entry name" value="ACETATEKNASE"/>
</dbReference>
<dbReference type="SUPFAM" id="SSF53067">
    <property type="entry name" value="Actin-like ATPase domain"/>
    <property type="match status" value="2"/>
</dbReference>
<dbReference type="PROSITE" id="PS01075">
    <property type="entry name" value="ACETATE_KINASE_1"/>
    <property type="match status" value="1"/>
</dbReference>
<dbReference type="PROSITE" id="PS01076">
    <property type="entry name" value="ACETATE_KINASE_2"/>
    <property type="match status" value="1"/>
</dbReference>
<gene>
    <name evidence="1" type="primary">ackA</name>
    <name type="ordered locus">CE2590</name>
</gene>
<reference key="1">
    <citation type="journal article" date="2003" name="Genome Res.">
        <title>Comparative complete genome sequence analysis of the amino acid replacements responsible for the thermostability of Corynebacterium efficiens.</title>
        <authorList>
            <person name="Nishio Y."/>
            <person name="Nakamura Y."/>
            <person name="Kawarabayasi Y."/>
            <person name="Usuda Y."/>
            <person name="Kimura E."/>
            <person name="Sugimoto S."/>
            <person name="Matsui K."/>
            <person name="Yamagishi A."/>
            <person name="Kikuchi H."/>
            <person name="Ikeo K."/>
            <person name="Gojobori T."/>
        </authorList>
    </citation>
    <scope>NUCLEOTIDE SEQUENCE [LARGE SCALE GENOMIC DNA]</scope>
    <source>
        <strain>DSM 44549 / YS-314 / AJ 12310 / JCM 11189 / NBRC 100395</strain>
    </source>
</reference>
<accession>Q8FMB7</accession>
<sequence length="398" mass="43057">MALALVLNSGSSSIKFQLVNPANHATDDPFVSGLVEQIGEKMGRIILKIEGEKVVKEAPIADHSAGLSMSFDLMTEHGCGPSQVDIIAVGHRVVHGGILFSAPELITDEIVEMIRDLIPLAPLHNPANIDGIEVARRILPDVPHVAVFDTGFFHSLPPAAALYAINKDVAAEYGIRRYGFHGTSHEYVSSRVVDLMDKPAEEINTITFHLGNGASMAAVKGGVAVDTSMGMTPLAGLVMGTRTGDIDPGVVFHLARNANMSIDEIDNLMNKKSGVKGLSGVNDFRELHQMIEDGDQDAWSAYNIYIHQLRRYLGSYMVALGRVDCLVFTAGVGENAHFVREDALAGLEMYGIKVDPERNKLPNDGPRLISTDDSTVKVFVIPTNEELAIARYSAKFAE</sequence>
<comment type="function">
    <text evidence="1">Catalyzes the formation of acetyl phosphate from acetate and ATP. Can also catalyze the reverse reaction.</text>
</comment>
<comment type="catalytic activity">
    <reaction evidence="1">
        <text>acetate + ATP = acetyl phosphate + ADP</text>
        <dbReference type="Rhea" id="RHEA:11352"/>
        <dbReference type="ChEBI" id="CHEBI:22191"/>
        <dbReference type="ChEBI" id="CHEBI:30089"/>
        <dbReference type="ChEBI" id="CHEBI:30616"/>
        <dbReference type="ChEBI" id="CHEBI:456216"/>
        <dbReference type="EC" id="2.7.2.1"/>
    </reaction>
</comment>
<comment type="cofactor">
    <cofactor evidence="1">
        <name>Mg(2+)</name>
        <dbReference type="ChEBI" id="CHEBI:18420"/>
    </cofactor>
    <cofactor evidence="1">
        <name>Mn(2+)</name>
        <dbReference type="ChEBI" id="CHEBI:29035"/>
    </cofactor>
    <text evidence="1">Mg(2+). Can also accept Mn(2+).</text>
</comment>
<comment type="pathway">
    <text evidence="1">Metabolic intermediate biosynthesis; acetyl-CoA biosynthesis; acetyl-CoA from acetate: step 1/2.</text>
</comment>
<comment type="subunit">
    <text evidence="1">Homodimer.</text>
</comment>
<comment type="subcellular location">
    <subcellularLocation>
        <location evidence="1">Cytoplasm</location>
    </subcellularLocation>
</comment>
<comment type="similarity">
    <text evidence="1">Belongs to the acetokinase family.</text>
</comment>
<name>ACKA_COREF</name>
<feature type="chain" id="PRO_0000107552" description="Acetate kinase">
    <location>
        <begin position="1"/>
        <end position="398"/>
    </location>
</feature>
<feature type="active site" description="Proton donor/acceptor" evidence="1">
    <location>
        <position position="149"/>
    </location>
</feature>
<feature type="binding site" evidence="1">
    <location>
        <position position="8"/>
    </location>
    <ligand>
        <name>Mg(2+)</name>
        <dbReference type="ChEBI" id="CHEBI:18420"/>
    </ligand>
</feature>
<feature type="binding site" evidence="1">
    <location>
        <position position="15"/>
    </location>
    <ligand>
        <name>ATP</name>
        <dbReference type="ChEBI" id="CHEBI:30616"/>
    </ligand>
</feature>
<feature type="binding site" evidence="1">
    <location>
        <position position="92"/>
    </location>
    <ligand>
        <name>substrate</name>
    </ligand>
</feature>
<feature type="binding site" evidence="1">
    <location>
        <begin position="209"/>
        <end position="213"/>
    </location>
    <ligand>
        <name>ATP</name>
        <dbReference type="ChEBI" id="CHEBI:30616"/>
    </ligand>
</feature>
<feature type="binding site" evidence="1">
    <location>
        <begin position="283"/>
        <end position="285"/>
    </location>
    <ligand>
        <name>ATP</name>
        <dbReference type="ChEBI" id="CHEBI:30616"/>
    </ligand>
</feature>
<feature type="binding site" evidence="1">
    <location>
        <begin position="331"/>
        <end position="335"/>
    </location>
    <ligand>
        <name>ATP</name>
        <dbReference type="ChEBI" id="CHEBI:30616"/>
    </ligand>
</feature>
<feature type="binding site" evidence="1">
    <location>
        <position position="385"/>
    </location>
    <ligand>
        <name>Mg(2+)</name>
        <dbReference type="ChEBI" id="CHEBI:18420"/>
    </ligand>
</feature>
<feature type="site" description="Transition state stabilizer" evidence="1">
    <location>
        <position position="181"/>
    </location>
</feature>
<feature type="site" description="Transition state stabilizer" evidence="1">
    <location>
        <position position="242"/>
    </location>
</feature>
<proteinExistence type="inferred from homology"/>
<organism>
    <name type="scientific">Corynebacterium efficiens (strain DSM 44549 / YS-314 / AJ 12310 / JCM 11189 / NBRC 100395)</name>
    <dbReference type="NCBI Taxonomy" id="196164"/>
    <lineage>
        <taxon>Bacteria</taxon>
        <taxon>Bacillati</taxon>
        <taxon>Actinomycetota</taxon>
        <taxon>Actinomycetes</taxon>
        <taxon>Mycobacteriales</taxon>
        <taxon>Corynebacteriaceae</taxon>
        <taxon>Corynebacterium</taxon>
    </lineage>
</organism>
<evidence type="ECO:0000255" key="1">
    <source>
        <dbReference type="HAMAP-Rule" id="MF_00020"/>
    </source>
</evidence>
<keyword id="KW-0067">ATP-binding</keyword>
<keyword id="KW-0963">Cytoplasm</keyword>
<keyword id="KW-0418">Kinase</keyword>
<keyword id="KW-0460">Magnesium</keyword>
<keyword id="KW-0479">Metal-binding</keyword>
<keyword id="KW-0547">Nucleotide-binding</keyword>
<keyword id="KW-1185">Reference proteome</keyword>
<keyword id="KW-0808">Transferase</keyword>
<protein>
    <recommendedName>
        <fullName evidence="1">Acetate kinase</fullName>
        <ecNumber evidence="1">2.7.2.1</ecNumber>
    </recommendedName>
    <alternativeName>
        <fullName evidence="1">Acetokinase</fullName>
    </alternativeName>
</protein>